<dbReference type="EMBL" id="CP000061">
    <property type="protein sequence ID" value="ABC65641.1"/>
    <property type="molecule type" value="Genomic_DNA"/>
</dbReference>
<dbReference type="RefSeq" id="WP_011412803.1">
    <property type="nucleotide sequence ID" value="NC_007716.1"/>
</dbReference>
<dbReference type="SMR" id="Q2NIV2"/>
<dbReference type="STRING" id="322098.AYWB_524"/>
<dbReference type="KEGG" id="ayw:AYWB_524"/>
<dbReference type="eggNOG" id="COG0051">
    <property type="taxonomic scope" value="Bacteria"/>
</dbReference>
<dbReference type="HOGENOM" id="CLU_122625_1_3_14"/>
<dbReference type="OrthoDB" id="9804464at2"/>
<dbReference type="PhylomeDB" id="Q2NIV2"/>
<dbReference type="Proteomes" id="UP000001934">
    <property type="component" value="Chromosome"/>
</dbReference>
<dbReference type="GO" id="GO:1990904">
    <property type="term" value="C:ribonucleoprotein complex"/>
    <property type="evidence" value="ECO:0007669"/>
    <property type="project" value="UniProtKB-KW"/>
</dbReference>
<dbReference type="GO" id="GO:0005840">
    <property type="term" value="C:ribosome"/>
    <property type="evidence" value="ECO:0007669"/>
    <property type="project" value="UniProtKB-KW"/>
</dbReference>
<dbReference type="GO" id="GO:0003735">
    <property type="term" value="F:structural constituent of ribosome"/>
    <property type="evidence" value="ECO:0007669"/>
    <property type="project" value="InterPro"/>
</dbReference>
<dbReference type="GO" id="GO:0000049">
    <property type="term" value="F:tRNA binding"/>
    <property type="evidence" value="ECO:0007669"/>
    <property type="project" value="UniProtKB-UniRule"/>
</dbReference>
<dbReference type="GO" id="GO:0006412">
    <property type="term" value="P:translation"/>
    <property type="evidence" value="ECO:0007669"/>
    <property type="project" value="UniProtKB-UniRule"/>
</dbReference>
<dbReference type="FunFam" id="3.30.70.600:FF:000003">
    <property type="entry name" value="30S ribosomal protein S10"/>
    <property type="match status" value="1"/>
</dbReference>
<dbReference type="Gene3D" id="3.30.70.600">
    <property type="entry name" value="Ribosomal protein S10 domain"/>
    <property type="match status" value="1"/>
</dbReference>
<dbReference type="HAMAP" id="MF_00508">
    <property type="entry name" value="Ribosomal_uS10"/>
    <property type="match status" value="1"/>
</dbReference>
<dbReference type="InterPro" id="IPR001848">
    <property type="entry name" value="Ribosomal_uS10"/>
</dbReference>
<dbReference type="InterPro" id="IPR018268">
    <property type="entry name" value="Ribosomal_uS10_CS"/>
</dbReference>
<dbReference type="InterPro" id="IPR027486">
    <property type="entry name" value="Ribosomal_uS10_dom"/>
</dbReference>
<dbReference type="InterPro" id="IPR036838">
    <property type="entry name" value="Ribosomal_uS10_dom_sf"/>
</dbReference>
<dbReference type="NCBIfam" id="NF001861">
    <property type="entry name" value="PRK00596.1"/>
    <property type="match status" value="1"/>
</dbReference>
<dbReference type="NCBIfam" id="TIGR01049">
    <property type="entry name" value="rpsJ_bact"/>
    <property type="match status" value="1"/>
</dbReference>
<dbReference type="PANTHER" id="PTHR11700">
    <property type="entry name" value="30S RIBOSOMAL PROTEIN S10 FAMILY MEMBER"/>
    <property type="match status" value="1"/>
</dbReference>
<dbReference type="Pfam" id="PF00338">
    <property type="entry name" value="Ribosomal_S10"/>
    <property type="match status" value="1"/>
</dbReference>
<dbReference type="PRINTS" id="PR00971">
    <property type="entry name" value="RIBOSOMALS10"/>
</dbReference>
<dbReference type="SMART" id="SM01403">
    <property type="entry name" value="Ribosomal_S10"/>
    <property type="match status" value="1"/>
</dbReference>
<dbReference type="SUPFAM" id="SSF54999">
    <property type="entry name" value="Ribosomal protein S10"/>
    <property type="match status" value="1"/>
</dbReference>
<dbReference type="PROSITE" id="PS00361">
    <property type="entry name" value="RIBOSOMAL_S10"/>
    <property type="match status" value="1"/>
</dbReference>
<protein>
    <recommendedName>
        <fullName evidence="1">Small ribosomal subunit protein uS10</fullName>
    </recommendedName>
    <alternativeName>
        <fullName evidence="2">30S ribosomal protein S10</fullName>
    </alternativeName>
</protein>
<keyword id="KW-0687">Ribonucleoprotein</keyword>
<keyword id="KW-0689">Ribosomal protein</keyword>
<name>RS10_AYWBP</name>
<evidence type="ECO:0000255" key="1">
    <source>
        <dbReference type="HAMAP-Rule" id="MF_00508"/>
    </source>
</evidence>
<evidence type="ECO:0000305" key="2"/>
<accession>Q2NIV2</accession>
<feature type="chain" id="PRO_0000237011" description="Small ribosomal subunit protein uS10">
    <location>
        <begin position="1"/>
        <end position="105"/>
    </location>
</feature>
<proteinExistence type="inferred from homology"/>
<gene>
    <name evidence="1" type="primary">rpsJ</name>
    <name type="ordered locus">AYWB_524</name>
</gene>
<sequence length="105" mass="12217">MNKKEKEIIKIILRAYDHHLIDQAAKKIIDIVSKTGVNIEGPIPLPTRKEVFTVLRSPFVNKDSREQFERRTHKRLIQIINPNKKTIESLMHISLPTAIDILLKK</sequence>
<reference key="1">
    <citation type="journal article" date="2006" name="J. Bacteriol.">
        <title>Living with genome instability: the adaptation of phytoplasmas to diverse environments of their insect and plant hosts.</title>
        <authorList>
            <person name="Bai X."/>
            <person name="Zhang J."/>
            <person name="Ewing A."/>
            <person name="Miller S.A."/>
            <person name="Jancso Radek A."/>
            <person name="Shevchenko D.V."/>
            <person name="Tsukerman K."/>
            <person name="Walunas T."/>
            <person name="Lapidus A."/>
            <person name="Campbell J.W."/>
            <person name="Hogenhout S.A."/>
        </authorList>
    </citation>
    <scope>NUCLEOTIDE SEQUENCE [LARGE SCALE GENOMIC DNA]</scope>
    <source>
        <strain>AYWB</strain>
    </source>
</reference>
<organism>
    <name type="scientific">Aster yellows witches'-broom phytoplasma (strain AYWB)</name>
    <dbReference type="NCBI Taxonomy" id="322098"/>
    <lineage>
        <taxon>Bacteria</taxon>
        <taxon>Bacillati</taxon>
        <taxon>Mycoplasmatota</taxon>
        <taxon>Mollicutes</taxon>
        <taxon>Acholeplasmatales</taxon>
        <taxon>Acholeplasmataceae</taxon>
        <taxon>Candidatus Phytoplasma</taxon>
        <taxon>16SrI (Aster yellows group)</taxon>
    </lineage>
</organism>
<comment type="function">
    <text evidence="1">Involved in the binding of tRNA to the ribosomes.</text>
</comment>
<comment type="subunit">
    <text evidence="1">Part of the 30S ribosomal subunit.</text>
</comment>
<comment type="similarity">
    <text evidence="1">Belongs to the universal ribosomal protein uS10 family.</text>
</comment>